<sequence length="509" mass="57416">MESESESSSTHSSCDRFLDAEDEFFYDSFSNHYDCLNSSPPANLRRRRLPMDTDSSSSSSTSSLESCEKRSTVGENDELEVSLVDFETIEIDVDVTDSANSSIDSISEKGEDFEVIDSCTDTEKNMGENDSGRVDPFTVTTLNDERGEIYTGPEYTSTDWSLTSLVIRSIEFQVSLMITFIRFPPWLISKCLSFVFDPYRTMRRGRRYLVSWIVGLCDSGLKDDKPVLELVRRVTWGLFCAVYVGIMLFALLVSAFMISGFVITYLAHEPLVIKESLNFDYTKSSPEAYVPISSCAGVAFGLSGKESIETGKVKGLKDRTEITVSMTLPESEYNRNLGMFQVRVDFLSASGHVLASSRRPCMVKFSSEPIRLVQTLLKIAPLVTGYVSEIQTLNLKLKGLVEKDIIPTACLKIMIEQRAEFRPGAGIPEIYDASLFLESKLPFLKRIIWNWRKTLFVWISMSLFIMELLFALVFFRPLIIPRTGQRTQQRDGTHSINNNLYLDGQAGSR</sequence>
<feature type="chain" id="PRO_0000434817" description="Seipin-3">
    <location>
        <begin position="1"/>
        <end position="509"/>
    </location>
</feature>
<feature type="transmembrane region" description="Helical" evidence="1">
    <location>
        <begin position="238"/>
        <end position="258"/>
    </location>
</feature>
<feature type="transmembrane region" description="Helical" evidence="1">
    <location>
        <begin position="455"/>
        <end position="475"/>
    </location>
</feature>
<feature type="region of interest" description="Disordered" evidence="2">
    <location>
        <begin position="33"/>
        <end position="73"/>
    </location>
</feature>
<feature type="compositionally biased region" description="Low complexity" evidence="2">
    <location>
        <begin position="52"/>
        <end position="63"/>
    </location>
</feature>
<evidence type="ECO:0000255" key="1"/>
<evidence type="ECO:0000256" key="2">
    <source>
        <dbReference type="SAM" id="MobiDB-lite"/>
    </source>
</evidence>
<evidence type="ECO:0000269" key="3">
    <source>
    </source>
</evidence>
<evidence type="ECO:0000303" key="4">
    <source>
    </source>
</evidence>
<evidence type="ECO:0000305" key="5"/>
<evidence type="ECO:0000312" key="6">
    <source>
        <dbReference type="Araport" id="AT2G34380"/>
    </source>
</evidence>
<evidence type="ECO:0000312" key="7">
    <source>
        <dbReference type="EMBL" id="AAC26703.1"/>
    </source>
</evidence>
<evidence type="ECO:0000312" key="8">
    <source>
        <dbReference type="EMBL" id="AAM14953.1"/>
    </source>
</evidence>
<evidence type="ECO:0000312" key="9">
    <source>
        <dbReference type="EMBL" id="AAM20522.1"/>
    </source>
</evidence>
<accession>Q8L615</accession>
<accession>O64707</accession>
<protein>
    <recommendedName>
        <fullName evidence="4">Seipin-3</fullName>
        <shortName evidence="4">AtSEIPIN3</shortName>
    </recommendedName>
</protein>
<keyword id="KW-0256">Endoplasmic reticulum</keyword>
<keyword id="KW-0443">Lipid metabolism</keyword>
<keyword id="KW-0472">Membrane</keyword>
<keyword id="KW-1185">Reference proteome</keyword>
<keyword id="KW-0812">Transmembrane</keyword>
<keyword id="KW-1133">Transmembrane helix</keyword>
<reference key="1">
    <citation type="journal article" date="1999" name="Nature">
        <title>Sequence and analysis of chromosome 2 of the plant Arabidopsis thaliana.</title>
        <authorList>
            <person name="Lin X."/>
            <person name="Kaul S."/>
            <person name="Rounsley S.D."/>
            <person name="Shea T.P."/>
            <person name="Benito M.-I."/>
            <person name="Town C.D."/>
            <person name="Fujii C.Y."/>
            <person name="Mason T.M."/>
            <person name="Bowman C.L."/>
            <person name="Barnstead M.E."/>
            <person name="Feldblyum T.V."/>
            <person name="Buell C.R."/>
            <person name="Ketchum K.A."/>
            <person name="Lee J.J."/>
            <person name="Ronning C.M."/>
            <person name="Koo H.L."/>
            <person name="Moffat K.S."/>
            <person name="Cronin L.A."/>
            <person name="Shen M."/>
            <person name="Pai G."/>
            <person name="Van Aken S."/>
            <person name="Umayam L."/>
            <person name="Tallon L.J."/>
            <person name="Gill J.E."/>
            <person name="Adams M.D."/>
            <person name="Carrera A.J."/>
            <person name="Creasy T.H."/>
            <person name="Goodman H.M."/>
            <person name="Somerville C.R."/>
            <person name="Copenhaver G.P."/>
            <person name="Preuss D."/>
            <person name="Nierman W.C."/>
            <person name="White O."/>
            <person name="Eisen J.A."/>
            <person name="Salzberg S.L."/>
            <person name="Fraser C.M."/>
            <person name="Venter J.C."/>
        </authorList>
    </citation>
    <scope>NUCLEOTIDE SEQUENCE [LARGE SCALE GENOMIC DNA]</scope>
    <source>
        <strain>cv. Columbia</strain>
    </source>
</reference>
<reference key="2">
    <citation type="journal article" date="2017" name="Plant J.">
        <title>Araport11: a complete reannotation of the Arabidopsis thaliana reference genome.</title>
        <authorList>
            <person name="Cheng C.Y."/>
            <person name="Krishnakumar V."/>
            <person name="Chan A.P."/>
            <person name="Thibaud-Nissen F."/>
            <person name="Schobel S."/>
            <person name="Town C.D."/>
        </authorList>
    </citation>
    <scope>GENOME REANNOTATION</scope>
    <source>
        <strain>cv. Columbia</strain>
    </source>
</reference>
<reference key="3">
    <citation type="journal article" date="2003" name="Science">
        <title>Empirical analysis of transcriptional activity in the Arabidopsis genome.</title>
        <authorList>
            <person name="Yamada K."/>
            <person name="Lim J."/>
            <person name="Dale J.M."/>
            <person name="Chen H."/>
            <person name="Shinn P."/>
            <person name="Palm C.J."/>
            <person name="Southwick A.M."/>
            <person name="Wu H.C."/>
            <person name="Kim C.J."/>
            <person name="Nguyen M."/>
            <person name="Pham P.K."/>
            <person name="Cheuk R.F."/>
            <person name="Karlin-Newmann G."/>
            <person name="Liu S.X."/>
            <person name="Lam B."/>
            <person name="Sakano H."/>
            <person name="Wu T."/>
            <person name="Yu G."/>
            <person name="Miranda M."/>
            <person name="Quach H.L."/>
            <person name="Tripp M."/>
            <person name="Chang C.H."/>
            <person name="Lee J.M."/>
            <person name="Toriumi M.J."/>
            <person name="Chan M.M."/>
            <person name="Tang C.C."/>
            <person name="Onodera C.S."/>
            <person name="Deng J.M."/>
            <person name="Akiyama K."/>
            <person name="Ansari Y."/>
            <person name="Arakawa T."/>
            <person name="Banh J."/>
            <person name="Banno F."/>
            <person name="Bowser L."/>
            <person name="Brooks S.Y."/>
            <person name="Carninci P."/>
            <person name="Chao Q."/>
            <person name="Choy N."/>
            <person name="Enju A."/>
            <person name="Goldsmith A.D."/>
            <person name="Gurjal M."/>
            <person name="Hansen N.F."/>
            <person name="Hayashizaki Y."/>
            <person name="Johnson-Hopson C."/>
            <person name="Hsuan V.W."/>
            <person name="Iida K."/>
            <person name="Karnes M."/>
            <person name="Khan S."/>
            <person name="Koesema E."/>
            <person name="Ishida J."/>
            <person name="Jiang P.X."/>
            <person name="Jones T."/>
            <person name="Kawai J."/>
            <person name="Kamiya A."/>
            <person name="Meyers C."/>
            <person name="Nakajima M."/>
            <person name="Narusaka M."/>
            <person name="Seki M."/>
            <person name="Sakurai T."/>
            <person name="Satou M."/>
            <person name="Tamse R."/>
            <person name="Vaysberg M."/>
            <person name="Wallender E.K."/>
            <person name="Wong C."/>
            <person name="Yamamura Y."/>
            <person name="Yuan S."/>
            <person name="Shinozaki K."/>
            <person name="Davis R.W."/>
            <person name="Theologis A."/>
            <person name="Ecker J.R."/>
        </authorList>
    </citation>
    <scope>NUCLEOTIDE SEQUENCE [LARGE SCALE MRNA]</scope>
    <source>
        <strain>cv. Columbia</strain>
    </source>
</reference>
<reference key="4">
    <citation type="journal article" date="2015" name="Plant Cell">
        <title>Arabidopsis SEIPIN proteins modulate triacylglycerol accumulation and influence lipid droplet proliferation.</title>
        <authorList>
            <person name="Cai Y."/>
            <person name="Goodman J.M."/>
            <person name="Pyc M."/>
            <person name="Mullen R.T."/>
            <person name="Dyer J.M."/>
            <person name="Chapman K.D."/>
        </authorList>
    </citation>
    <scope>FUNCTION</scope>
    <scope>SUBCELLULAR LOCATION</scope>
    <scope>TISSUE SPECIFICITY</scope>
    <scope>DOMAIN</scope>
</reference>
<dbReference type="EMBL" id="AC004077">
    <property type="protein sequence ID" value="AAC26703.1"/>
    <property type="status" value="ALT_INIT"/>
    <property type="molecule type" value="Genomic_DNA"/>
</dbReference>
<dbReference type="EMBL" id="AC004481">
    <property type="protein sequence ID" value="AAM14953.1"/>
    <property type="status" value="ALT_INIT"/>
    <property type="molecule type" value="Genomic_DNA"/>
</dbReference>
<dbReference type="EMBL" id="CP002685">
    <property type="protein sequence ID" value="AEC08966.1"/>
    <property type="molecule type" value="Genomic_DNA"/>
</dbReference>
<dbReference type="EMBL" id="AY099671">
    <property type="protein sequence ID" value="AAM20522.1"/>
    <property type="molecule type" value="mRNA"/>
</dbReference>
<dbReference type="EMBL" id="BT000262">
    <property type="protein sequence ID" value="AAN15581.1"/>
    <property type="molecule type" value="mRNA"/>
</dbReference>
<dbReference type="PIR" id="T02326">
    <property type="entry name" value="T02326"/>
</dbReference>
<dbReference type="RefSeq" id="NP_850230.1">
    <property type="nucleotide sequence ID" value="NM_179899.1"/>
</dbReference>
<dbReference type="FunCoup" id="Q8L615">
    <property type="interactions" value="1819"/>
</dbReference>
<dbReference type="IntAct" id="Q8L615">
    <property type="interactions" value="1"/>
</dbReference>
<dbReference type="STRING" id="3702.Q8L615"/>
<dbReference type="GlyGen" id="Q8L615">
    <property type="glycosylation" value="1 site"/>
</dbReference>
<dbReference type="iPTMnet" id="Q8L615"/>
<dbReference type="PaxDb" id="3702-AT2G34380.1"/>
<dbReference type="ProteomicsDB" id="232783"/>
<dbReference type="EnsemblPlants" id="AT2G34380.1">
    <property type="protein sequence ID" value="AT2G34380.1"/>
    <property type="gene ID" value="AT2G34380"/>
</dbReference>
<dbReference type="GeneID" id="818001"/>
<dbReference type="Gramene" id="AT2G34380.1">
    <property type="protein sequence ID" value="AT2G34380.1"/>
    <property type="gene ID" value="AT2G34380"/>
</dbReference>
<dbReference type="KEGG" id="ath:AT2G34380"/>
<dbReference type="Araport" id="AT2G34380"/>
<dbReference type="TAIR" id="AT2G34380">
    <property type="gene designation" value="SEIPIN3"/>
</dbReference>
<dbReference type="eggNOG" id="KOG4200">
    <property type="taxonomic scope" value="Eukaryota"/>
</dbReference>
<dbReference type="HOGENOM" id="CLU_035656_1_1_1"/>
<dbReference type="InParanoid" id="Q8L615"/>
<dbReference type="OMA" id="TSRRPCM"/>
<dbReference type="OrthoDB" id="3990054at2759"/>
<dbReference type="PhylomeDB" id="Q8L615"/>
<dbReference type="PRO" id="PR:Q8L615"/>
<dbReference type="Proteomes" id="UP000006548">
    <property type="component" value="Chromosome 2"/>
</dbReference>
<dbReference type="ExpressionAtlas" id="Q8L615">
    <property type="expression patterns" value="baseline and differential"/>
</dbReference>
<dbReference type="GO" id="GO:0005783">
    <property type="term" value="C:endoplasmic reticulum"/>
    <property type="evidence" value="ECO:0000314"/>
    <property type="project" value="UniProtKB"/>
</dbReference>
<dbReference type="GO" id="GO:0005789">
    <property type="term" value="C:endoplasmic reticulum membrane"/>
    <property type="evidence" value="ECO:0007669"/>
    <property type="project" value="UniProtKB-SubCell"/>
</dbReference>
<dbReference type="GO" id="GO:0140042">
    <property type="term" value="P:lipid droplet formation"/>
    <property type="evidence" value="ECO:0000316"/>
    <property type="project" value="TAIR"/>
</dbReference>
<dbReference type="GO" id="GO:0034389">
    <property type="term" value="P:lipid droplet organization"/>
    <property type="evidence" value="ECO:0000315"/>
    <property type="project" value="UniProtKB"/>
</dbReference>
<dbReference type="GO" id="GO:0006629">
    <property type="term" value="P:lipid metabolic process"/>
    <property type="evidence" value="ECO:0007669"/>
    <property type="project" value="UniProtKB-KW"/>
</dbReference>
<dbReference type="GO" id="GO:0009846">
    <property type="term" value="P:pollen germination"/>
    <property type="evidence" value="ECO:0000316"/>
    <property type="project" value="TAIR"/>
</dbReference>
<dbReference type="GO" id="GO:0080155">
    <property type="term" value="P:regulation of double fertilization forming a zygote and endosperm"/>
    <property type="evidence" value="ECO:0000316"/>
    <property type="project" value="TAIR"/>
</dbReference>
<dbReference type="GO" id="GO:0010162">
    <property type="term" value="P:seed dormancy process"/>
    <property type="evidence" value="ECO:0000316"/>
    <property type="project" value="TAIR"/>
</dbReference>
<dbReference type="CDD" id="cd23995">
    <property type="entry name" value="Seipin_BSCL2_like"/>
    <property type="match status" value="1"/>
</dbReference>
<dbReference type="InterPro" id="IPR009617">
    <property type="entry name" value="Seipin"/>
</dbReference>
<dbReference type="PANTHER" id="PTHR21212">
    <property type="entry name" value="BERNARDINELLI-SEIP CONGENITAL LIPODYSTROPHY 2 HOMOLOG BSCL2 PROTEIN"/>
    <property type="match status" value="1"/>
</dbReference>
<dbReference type="PANTHER" id="PTHR21212:SF7">
    <property type="entry name" value="SEIPIN-3"/>
    <property type="match status" value="1"/>
</dbReference>
<dbReference type="Pfam" id="PF06775">
    <property type="entry name" value="Seipin"/>
    <property type="match status" value="1"/>
</dbReference>
<name>SEI3_ARATH</name>
<organism evidence="9">
    <name type="scientific">Arabidopsis thaliana</name>
    <name type="common">Mouse-ear cress</name>
    <dbReference type="NCBI Taxonomy" id="3702"/>
    <lineage>
        <taxon>Eukaryota</taxon>
        <taxon>Viridiplantae</taxon>
        <taxon>Streptophyta</taxon>
        <taxon>Embryophyta</taxon>
        <taxon>Tracheophyta</taxon>
        <taxon>Spermatophyta</taxon>
        <taxon>Magnoliopsida</taxon>
        <taxon>eudicotyledons</taxon>
        <taxon>Gunneridae</taxon>
        <taxon>Pentapetalae</taxon>
        <taxon>rosids</taxon>
        <taxon>malvids</taxon>
        <taxon>Brassicales</taxon>
        <taxon>Brassicaceae</taxon>
        <taxon>Camelineae</taxon>
        <taxon>Arabidopsis</taxon>
    </lineage>
</organism>
<proteinExistence type="evidence at transcript level"/>
<gene>
    <name evidence="5" type="primary">SEI3</name>
    <name evidence="6" type="ordered locus">At2g34380</name>
    <name evidence="8" type="ORF">F13P17.31</name>
    <name evidence="7" type="ORF">T31E10</name>
</gene>
<comment type="function">
    <text evidence="3">Involved in lipid metabolism and lipid droplet (LD) morphology, number, and size. Supports the formation of small-sized LDs and modulates triacylglycerol accumulation. Induces probably a reorganization of the endoplasmic reticulum into LD-forming domains.</text>
</comment>
<comment type="subcellular location">
    <subcellularLocation>
        <location evidence="3">Endoplasmic reticulum membrane</location>
        <topology evidence="1">Multi-pass membrane protein</topology>
    </subcellularLocation>
    <text evidence="3">Localized to the lipid droplet-forming sites.</text>
</comment>
<comment type="tissue specificity">
    <text evidence="3">Expressed in seeds, seedlings, leaves, stems and roots. Not detected in flowers.</text>
</comment>
<comment type="domain">
    <text evidence="3">The N-terminal domain (1-230) determines the lipid droplet size.</text>
</comment>
<comment type="similarity">
    <text evidence="5">Belongs to the seipin family.</text>
</comment>
<comment type="sequence caution" evidence="5">
    <conflict type="erroneous initiation">
        <sequence resource="EMBL-CDS" id="AAC26703"/>
    </conflict>
    <text>Truncated N-terminus.</text>
</comment>
<comment type="sequence caution" evidence="5">
    <conflict type="erroneous initiation">
        <sequence resource="EMBL-CDS" id="AAM14953"/>
    </conflict>
    <text>Truncated N-terminus.</text>
</comment>